<reference key="1">
    <citation type="journal article" date="2009" name="PLoS ONE">
        <title>Methylobacterium genome sequences: a reference blueprint to investigate microbial metabolism of C1 compounds from natural and industrial sources.</title>
        <authorList>
            <person name="Vuilleumier S."/>
            <person name="Chistoserdova L."/>
            <person name="Lee M.-C."/>
            <person name="Bringel F."/>
            <person name="Lajus A."/>
            <person name="Zhou Y."/>
            <person name="Gourion B."/>
            <person name="Barbe V."/>
            <person name="Chang J."/>
            <person name="Cruveiller S."/>
            <person name="Dossat C."/>
            <person name="Gillett W."/>
            <person name="Gruffaz C."/>
            <person name="Haugen E."/>
            <person name="Hourcade E."/>
            <person name="Levy R."/>
            <person name="Mangenot S."/>
            <person name="Muller E."/>
            <person name="Nadalig T."/>
            <person name="Pagni M."/>
            <person name="Penny C."/>
            <person name="Peyraud R."/>
            <person name="Robinson D.G."/>
            <person name="Roche D."/>
            <person name="Rouy Z."/>
            <person name="Saenampechek C."/>
            <person name="Salvignol G."/>
            <person name="Vallenet D."/>
            <person name="Wu Z."/>
            <person name="Marx C.J."/>
            <person name="Vorholt J.A."/>
            <person name="Olson M.V."/>
            <person name="Kaul R."/>
            <person name="Weissenbach J."/>
            <person name="Medigue C."/>
            <person name="Lidstrom M.E."/>
        </authorList>
    </citation>
    <scope>NUCLEOTIDE SEQUENCE [LARGE SCALE GENOMIC DNA]</scope>
    <source>
        <strain>ATCC 14718 / DSM 1338 / JCM 2805 / NCIMB 9133 / AM1</strain>
    </source>
</reference>
<reference key="2">
    <citation type="journal article" date="2001" name="Eur. J. Biochem.">
        <title>Characterization of the formyltransferase from Methylobacterium extorquens AM1.</title>
        <authorList>
            <person name="Pomper B.K."/>
            <person name="Vorholt J.A."/>
        </authorList>
    </citation>
    <scope>PROTEIN SEQUENCE OF 2-15</scope>
    <scope>FUNCTION IN FORMALDEHYDE DEGRADATION</scope>
    <scope>SUBUNIT</scope>
</reference>
<reference key="3">
    <citation type="journal article" date="2002" name="FEBS Lett.">
        <title>Generation of formate by the formyltransferase/hydrolase complex (Fhc) from Methylobacterium extorquens AM1.</title>
        <authorList>
            <person name="Pomper B.K."/>
            <person name="Saurel O."/>
            <person name="Milon A."/>
            <person name="Vorholt J.A."/>
        </authorList>
    </citation>
    <scope>FUNCTION AS A HYDROLASE</scope>
</reference>
<proteinExistence type="evidence at protein level"/>
<evidence type="ECO:0000250" key="1"/>
<evidence type="ECO:0000269" key="2">
    <source>
    </source>
</evidence>
<evidence type="ECO:0000269" key="3">
    <source>
    </source>
</evidence>
<evidence type="ECO:0000305" key="4"/>
<accession>C5B137</accession>
<organism>
    <name type="scientific">Methylorubrum extorquens (strain ATCC 14718 / DSM 1338 / JCM 2805 / NCIMB 9133 / AM1)</name>
    <name type="common">Methylobacterium extorquens</name>
    <dbReference type="NCBI Taxonomy" id="272630"/>
    <lineage>
        <taxon>Bacteria</taxon>
        <taxon>Pseudomonadati</taxon>
        <taxon>Pseudomonadota</taxon>
        <taxon>Alphaproteobacteria</taxon>
        <taxon>Hyphomicrobiales</taxon>
        <taxon>Methylobacteriaceae</taxon>
        <taxon>Methylorubrum</taxon>
    </lineage>
</organism>
<feature type="initiator methionine" description="Removed" evidence="2">
    <location>
        <position position="1"/>
    </location>
</feature>
<feature type="chain" id="PRO_0000421571" description="Formyltransferase/hydrolase complex Fhc subunit A">
    <location>
        <begin position="2"/>
        <end position="548"/>
    </location>
</feature>
<feature type="binding site" evidence="1">
    <location>
        <position position="57"/>
    </location>
    <ligand>
        <name>Zn(2+)</name>
        <dbReference type="ChEBI" id="CHEBI:29105"/>
        <label>1</label>
    </ligand>
</feature>
<feature type="binding site" evidence="1">
    <location>
        <position position="59"/>
    </location>
    <ligand>
        <name>Zn(2+)</name>
        <dbReference type="ChEBI" id="CHEBI:29105"/>
        <label>1</label>
    </ligand>
</feature>
<feature type="binding site" evidence="1">
    <location>
        <position position="227"/>
    </location>
    <ligand>
        <name>Zn(2+)</name>
        <dbReference type="ChEBI" id="CHEBI:29105"/>
        <label>2</label>
    </ligand>
</feature>
<gene>
    <name type="primary">fhcA</name>
    <name type="ordered locus">MexAM1_META1p1757</name>
</gene>
<dbReference type="EC" id="3.5.1.-"/>
<dbReference type="EMBL" id="CP001510">
    <property type="protein sequence ID" value="ACS39601.1"/>
    <property type="molecule type" value="Genomic_DNA"/>
</dbReference>
<dbReference type="RefSeq" id="WP_012752613.1">
    <property type="nucleotide sequence ID" value="NC_012808.1"/>
</dbReference>
<dbReference type="SMR" id="C5B137"/>
<dbReference type="STRING" id="272630.MexAM1_META1p1757"/>
<dbReference type="KEGG" id="mea:Mex_1p1757"/>
<dbReference type="eggNOG" id="COG1229">
    <property type="taxonomic scope" value="Bacteria"/>
</dbReference>
<dbReference type="HOGENOM" id="CLU_035587_0_0_5"/>
<dbReference type="OrthoDB" id="9807210at2"/>
<dbReference type="UniPathway" id="UPA00562">
    <property type="reaction ID" value="UER00704"/>
</dbReference>
<dbReference type="Proteomes" id="UP000009081">
    <property type="component" value="Chromosome"/>
</dbReference>
<dbReference type="GO" id="GO:0005737">
    <property type="term" value="C:cytoplasm"/>
    <property type="evidence" value="ECO:0007669"/>
    <property type="project" value="UniProtKB-SubCell"/>
</dbReference>
<dbReference type="GO" id="GO:0016810">
    <property type="term" value="F:hydrolase activity, acting on carbon-nitrogen (but not peptide) bonds"/>
    <property type="evidence" value="ECO:0000314"/>
    <property type="project" value="UniProtKB"/>
</dbReference>
<dbReference type="GO" id="GO:0046872">
    <property type="term" value="F:metal ion binding"/>
    <property type="evidence" value="ECO:0007669"/>
    <property type="project" value="UniProtKB-KW"/>
</dbReference>
<dbReference type="GO" id="GO:0046294">
    <property type="term" value="P:formaldehyde catabolic process"/>
    <property type="evidence" value="ECO:0007669"/>
    <property type="project" value="UniProtKB-UniPathway"/>
</dbReference>
<dbReference type="GO" id="GO:0006730">
    <property type="term" value="P:one-carbon metabolic process"/>
    <property type="evidence" value="ECO:0000314"/>
    <property type="project" value="UniProtKB"/>
</dbReference>
<dbReference type="CDD" id="cd01304">
    <property type="entry name" value="FMDH_A"/>
    <property type="match status" value="1"/>
</dbReference>
<dbReference type="Gene3D" id="2.30.40.10">
    <property type="entry name" value="Urease, subunit C, domain 1"/>
    <property type="match status" value="1"/>
</dbReference>
<dbReference type="InterPro" id="IPR013108">
    <property type="entry name" value="Amidohydro_3"/>
</dbReference>
<dbReference type="InterPro" id="IPR012027">
    <property type="entry name" value="Formylmethanofuran_DH_asu"/>
</dbReference>
<dbReference type="InterPro" id="IPR011059">
    <property type="entry name" value="Metal-dep_hydrolase_composite"/>
</dbReference>
<dbReference type="InterPro" id="IPR032466">
    <property type="entry name" value="Metal_Hydrolase"/>
</dbReference>
<dbReference type="InterPro" id="IPR050378">
    <property type="entry name" value="Metallo-dep_Hydrolases_sf"/>
</dbReference>
<dbReference type="NCBIfam" id="TIGR03121">
    <property type="entry name" value="one_C_dehyd_A"/>
    <property type="match status" value="1"/>
</dbReference>
<dbReference type="PANTHER" id="PTHR11647:SF1">
    <property type="entry name" value="COLLAPSIN RESPONSE MEDIATOR PROTEIN"/>
    <property type="match status" value="1"/>
</dbReference>
<dbReference type="PANTHER" id="PTHR11647">
    <property type="entry name" value="HYDRANTOINASE/DIHYDROPYRIMIDINASE FAMILY MEMBER"/>
    <property type="match status" value="1"/>
</dbReference>
<dbReference type="Pfam" id="PF07969">
    <property type="entry name" value="Amidohydro_3"/>
    <property type="match status" value="1"/>
</dbReference>
<dbReference type="PIRSF" id="PIRSF006453">
    <property type="entry name" value="FwdA"/>
    <property type="match status" value="1"/>
</dbReference>
<dbReference type="SUPFAM" id="SSF51338">
    <property type="entry name" value="Composite domain of metallo-dependent hydrolases"/>
    <property type="match status" value="1"/>
</dbReference>
<dbReference type="SUPFAM" id="SSF51556">
    <property type="entry name" value="Metallo-dependent hydrolases"/>
    <property type="match status" value="1"/>
</dbReference>
<protein>
    <recommendedName>
        <fullName>Formyltransferase/hydrolase complex Fhc subunit A</fullName>
        <shortName>Ftr complex</shortName>
        <ecNumber>3.5.1.-</ecNumber>
    </recommendedName>
</protein>
<keyword id="KW-0963">Cytoplasm</keyword>
<keyword id="KW-0903">Direct protein sequencing</keyword>
<keyword id="KW-0378">Hydrolase</keyword>
<keyword id="KW-0479">Metal-binding</keyword>
<keyword id="KW-0554">One-carbon metabolism</keyword>
<keyword id="KW-1185">Reference proteome</keyword>
<keyword id="KW-0862">Zinc</keyword>
<comment type="function">
    <text evidence="2 3">Involved in the transformation of 5-formyl tetrahydromethanopterin (5-formyl-H(4)MPT) to methanofuran (MFR) and formate via the formylmethanofuran (formyl-MFR). May be catalyze the hydrolysis of formylmethanofuran (formyl-MFR) to yield formate and MFR.</text>
</comment>
<comment type="catalytic activity">
    <reaction>
        <text>N-formylmethanofuran + H2O = methanofuran + formate</text>
        <dbReference type="Rhea" id="RHEA:24686"/>
        <dbReference type="ChEBI" id="CHEBI:15377"/>
        <dbReference type="ChEBI" id="CHEBI:15740"/>
        <dbReference type="ChEBI" id="CHEBI:57727"/>
        <dbReference type="ChEBI" id="CHEBI:58151"/>
    </reaction>
</comment>
<comment type="cofactor">
    <cofactor evidence="1">
        <name>Zn(2+)</name>
        <dbReference type="ChEBI" id="CHEBI:29105"/>
    </cofactor>
    <text evidence="1">Binds 2 Zn(2+) ions per subunit.</text>
</comment>
<comment type="pathway">
    <text>One-carbon metabolism; formaldehyde degradation; formate from formaldehyde (H(4)MPT route): step 4/5.</text>
</comment>
<comment type="subunit">
    <text evidence="2">Octaheteromer. Part of the formyltransferase/hydrolase complex fhc; composed of FhcA, FhcB, FhcC and FhcD.</text>
</comment>
<comment type="subcellular location">
    <subcellularLocation>
        <location evidence="1">Cytoplasm</location>
    </subcellularLocation>
</comment>
<comment type="similarity">
    <text evidence="4">Belongs to the metallo-dependent hydrolases superfamily. FwdA/FmdA family.</text>
</comment>
<sequence>MLTRIHGGRVVDPTAGRDAVGDVWIEDGRVVAPSERAPDQTIDATGCVVMAGGVEVHSHIAGGNVVMSRLLLPDLYVSESAPNGHPFAHAGGSGSWIGANYARMGYTTAVEPALPPSNALATHLELADIPLLDRGGLAVLGNDDHLLQLLRDGEGKQAVRDLVQQTLAHSRGLGVKCINAGGASAFKDGVLKLSLDDEIPCYGLSTRKIMSALLDAVEEIGVPHPLHVHCNNLGLPGADDSLVATLEAAEGRRIHFAHAQFYAYGVVDPENPMTGGFRSAAERINAAMEAHPNATYDVGQVVFGQTVTISLDILRQFGGRKGAKPKKWVISAGDAEGGGVVPFLYRPRGPVSSLQWAIGLELMLLSSNPERTILTTDHPNGGVFTEYPRIIHLLMDAEERAKEIATLPAIVGERSGLPKIEREYSFSEIAQLTRSGPAKLLGLTDRGHLREGAKADVAIYRDDKDRTAMFSRAKLVLKDGQPIVEDGEVVAWFSGKTLSLDVEADAGMEKRAESYLQDRFGAGLDTFAVPDAAFPENTGTFEDVACRA</sequence>
<name>FHCA_METEA</name>